<sequence length="207" mass="23483">MEAFTVVEAVVAPLDRPNVDTDAIIPKQFLKTIERKGLGKHLFDAWRYLERDGKQVNNPDFVLNQPAYAGAQILLARENFGCGSSREHAPWALADYGFRAVIAPSFADIFANNCVQNGILLVRLPMDVVDHLFHEVAANPGYRLRIDLPAQEVQTMGDSRYAFPMDAGHKHKLMHGLDDIQLTLQRDNAIRVYEARRRQTAPWLFRD</sequence>
<protein>
    <recommendedName>
        <fullName evidence="1">3-isopropylmalate dehydratase small subunit</fullName>
        <ecNumber evidence="1">4.2.1.33</ecNumber>
    </recommendedName>
    <alternativeName>
        <fullName evidence="1">Alpha-IPM isomerase</fullName>
        <shortName evidence="1">IPMI</shortName>
    </alternativeName>
    <alternativeName>
        <fullName evidence="1">Isopropylmalate isomerase</fullName>
    </alternativeName>
</protein>
<reference key="1">
    <citation type="journal article" date="2008" name="BMC Genomics">
        <title>Acidithiobacillus ferrooxidans metabolism: from genome sequence to industrial applications.</title>
        <authorList>
            <person name="Valdes J."/>
            <person name="Pedroso I."/>
            <person name="Quatrini R."/>
            <person name="Dodson R.J."/>
            <person name="Tettelin H."/>
            <person name="Blake R. II"/>
            <person name="Eisen J.A."/>
            <person name="Holmes D.S."/>
        </authorList>
    </citation>
    <scope>NUCLEOTIDE SEQUENCE [LARGE SCALE GENOMIC DNA]</scope>
    <source>
        <strain>ATCC 23270 / DSM 14882 / CIP 104768 / NCIMB 8455</strain>
    </source>
</reference>
<organism>
    <name type="scientific">Acidithiobacillus ferrooxidans (strain ATCC 23270 / DSM 14882 / CIP 104768 / NCIMB 8455)</name>
    <name type="common">Ferrobacillus ferrooxidans (strain ATCC 23270)</name>
    <dbReference type="NCBI Taxonomy" id="243159"/>
    <lineage>
        <taxon>Bacteria</taxon>
        <taxon>Pseudomonadati</taxon>
        <taxon>Pseudomonadota</taxon>
        <taxon>Acidithiobacillia</taxon>
        <taxon>Acidithiobacillales</taxon>
        <taxon>Acidithiobacillaceae</taxon>
        <taxon>Acidithiobacillus</taxon>
    </lineage>
</organism>
<evidence type="ECO:0000255" key="1">
    <source>
        <dbReference type="HAMAP-Rule" id="MF_01031"/>
    </source>
</evidence>
<accession>B7J5S3</accession>
<keyword id="KW-0028">Amino-acid biosynthesis</keyword>
<keyword id="KW-0100">Branched-chain amino acid biosynthesis</keyword>
<keyword id="KW-0432">Leucine biosynthesis</keyword>
<keyword id="KW-0456">Lyase</keyword>
<keyword id="KW-1185">Reference proteome</keyword>
<dbReference type="EC" id="4.2.1.33" evidence="1"/>
<dbReference type="EMBL" id="CP001219">
    <property type="protein sequence ID" value="ACK80198.1"/>
    <property type="molecule type" value="Genomic_DNA"/>
</dbReference>
<dbReference type="RefSeq" id="WP_009562654.1">
    <property type="nucleotide sequence ID" value="NC_011761.1"/>
</dbReference>
<dbReference type="SMR" id="B7J5S3"/>
<dbReference type="STRING" id="243159.AFE_0626"/>
<dbReference type="PaxDb" id="243159-AFE_0626"/>
<dbReference type="GeneID" id="65279977"/>
<dbReference type="KEGG" id="afr:AFE_0626"/>
<dbReference type="eggNOG" id="COG0066">
    <property type="taxonomic scope" value="Bacteria"/>
</dbReference>
<dbReference type="HOGENOM" id="CLU_081378_0_3_6"/>
<dbReference type="UniPathway" id="UPA00048">
    <property type="reaction ID" value="UER00071"/>
</dbReference>
<dbReference type="Proteomes" id="UP000001362">
    <property type="component" value="Chromosome"/>
</dbReference>
<dbReference type="GO" id="GO:0009316">
    <property type="term" value="C:3-isopropylmalate dehydratase complex"/>
    <property type="evidence" value="ECO:0007669"/>
    <property type="project" value="InterPro"/>
</dbReference>
<dbReference type="GO" id="GO:0003861">
    <property type="term" value="F:3-isopropylmalate dehydratase activity"/>
    <property type="evidence" value="ECO:0007669"/>
    <property type="project" value="UniProtKB-UniRule"/>
</dbReference>
<dbReference type="GO" id="GO:0009098">
    <property type="term" value="P:L-leucine biosynthetic process"/>
    <property type="evidence" value="ECO:0007669"/>
    <property type="project" value="UniProtKB-UniRule"/>
</dbReference>
<dbReference type="CDD" id="cd01577">
    <property type="entry name" value="IPMI_Swivel"/>
    <property type="match status" value="1"/>
</dbReference>
<dbReference type="FunFam" id="3.20.19.10:FF:000003">
    <property type="entry name" value="3-isopropylmalate dehydratase small subunit"/>
    <property type="match status" value="1"/>
</dbReference>
<dbReference type="Gene3D" id="3.20.19.10">
    <property type="entry name" value="Aconitase, domain 4"/>
    <property type="match status" value="1"/>
</dbReference>
<dbReference type="HAMAP" id="MF_01031">
    <property type="entry name" value="LeuD_type1"/>
    <property type="match status" value="1"/>
</dbReference>
<dbReference type="InterPro" id="IPR004431">
    <property type="entry name" value="3-IsopropMal_deHydase_ssu"/>
</dbReference>
<dbReference type="InterPro" id="IPR015928">
    <property type="entry name" value="Aconitase/3IPM_dehydase_swvl"/>
</dbReference>
<dbReference type="InterPro" id="IPR000573">
    <property type="entry name" value="AconitaseA/IPMdHydase_ssu_swvl"/>
</dbReference>
<dbReference type="InterPro" id="IPR033940">
    <property type="entry name" value="IPMI_Swivel"/>
</dbReference>
<dbReference type="InterPro" id="IPR050075">
    <property type="entry name" value="LeuD"/>
</dbReference>
<dbReference type="NCBIfam" id="TIGR00171">
    <property type="entry name" value="leuD"/>
    <property type="match status" value="1"/>
</dbReference>
<dbReference type="NCBIfam" id="NF002458">
    <property type="entry name" value="PRK01641.1"/>
    <property type="match status" value="1"/>
</dbReference>
<dbReference type="PANTHER" id="PTHR43345:SF5">
    <property type="entry name" value="3-ISOPROPYLMALATE DEHYDRATASE SMALL SUBUNIT"/>
    <property type="match status" value="1"/>
</dbReference>
<dbReference type="PANTHER" id="PTHR43345">
    <property type="entry name" value="3-ISOPROPYLMALATE DEHYDRATASE SMALL SUBUNIT 2-RELATED-RELATED"/>
    <property type="match status" value="1"/>
</dbReference>
<dbReference type="Pfam" id="PF00694">
    <property type="entry name" value="Aconitase_C"/>
    <property type="match status" value="1"/>
</dbReference>
<dbReference type="SUPFAM" id="SSF52016">
    <property type="entry name" value="LeuD/IlvD-like"/>
    <property type="match status" value="1"/>
</dbReference>
<proteinExistence type="inferred from homology"/>
<name>LEUD_ACIF2</name>
<comment type="function">
    <text evidence="1">Catalyzes the isomerization between 2-isopropylmalate and 3-isopropylmalate, via the formation of 2-isopropylmaleate.</text>
</comment>
<comment type="catalytic activity">
    <reaction evidence="1">
        <text>(2R,3S)-3-isopropylmalate = (2S)-2-isopropylmalate</text>
        <dbReference type="Rhea" id="RHEA:32287"/>
        <dbReference type="ChEBI" id="CHEBI:1178"/>
        <dbReference type="ChEBI" id="CHEBI:35121"/>
        <dbReference type="EC" id="4.2.1.33"/>
    </reaction>
</comment>
<comment type="pathway">
    <text evidence="1">Amino-acid biosynthesis; L-leucine biosynthesis; L-leucine from 3-methyl-2-oxobutanoate: step 2/4.</text>
</comment>
<comment type="subunit">
    <text evidence="1">Heterodimer of LeuC and LeuD.</text>
</comment>
<comment type="similarity">
    <text evidence="1">Belongs to the LeuD family. LeuD type 1 subfamily.</text>
</comment>
<gene>
    <name evidence="1" type="primary">leuD</name>
    <name type="ordered locus">AFE_0626</name>
</gene>
<feature type="chain" id="PRO_1000135781" description="3-isopropylmalate dehydratase small subunit">
    <location>
        <begin position="1"/>
        <end position="207"/>
    </location>
</feature>